<evidence type="ECO:0000255" key="1">
    <source>
        <dbReference type="HAMAP-Rule" id="MF_00236"/>
    </source>
</evidence>
<proteinExistence type="inferred from homology"/>
<comment type="function">
    <text evidence="1">Part of the twin-arginine translocation (Tat) system that transports large folded proteins containing a characteristic twin-arginine motif in their signal peptide across membranes. TatA could form the protein-conducting channel of the Tat system.</text>
</comment>
<comment type="subunit">
    <text evidence="1">Forms a complex with TatC.</text>
</comment>
<comment type="subcellular location">
    <subcellularLocation>
        <location evidence="1">Cell membrane</location>
        <topology evidence="1">Single-pass membrane protein</topology>
    </subcellularLocation>
</comment>
<comment type="similarity">
    <text evidence="1">Belongs to the TatA/E family.</text>
</comment>
<keyword id="KW-1003">Cell membrane</keyword>
<keyword id="KW-0472">Membrane</keyword>
<keyword id="KW-0653">Protein transport</keyword>
<keyword id="KW-0811">Translocation</keyword>
<keyword id="KW-0812">Transmembrane</keyword>
<keyword id="KW-1133">Transmembrane helix</keyword>
<keyword id="KW-0813">Transport</keyword>
<gene>
    <name evidence="1" type="primary">tatA</name>
    <name type="ordered locus">Haur_3682</name>
</gene>
<feature type="chain" id="PRO_1000197875" description="Sec-independent protein translocase protein TatA">
    <location>
        <begin position="1"/>
        <end position="60"/>
    </location>
</feature>
<feature type="transmembrane region" description="Helical" evidence="1">
    <location>
        <begin position="1"/>
        <end position="21"/>
    </location>
</feature>
<protein>
    <recommendedName>
        <fullName evidence="1">Sec-independent protein translocase protein TatA</fullName>
    </recommendedName>
</protein>
<organism>
    <name type="scientific">Herpetosiphon aurantiacus (strain ATCC 23779 / DSM 785 / 114-95)</name>
    <dbReference type="NCBI Taxonomy" id="316274"/>
    <lineage>
        <taxon>Bacteria</taxon>
        <taxon>Bacillati</taxon>
        <taxon>Chloroflexota</taxon>
        <taxon>Chloroflexia</taxon>
        <taxon>Herpetosiphonales</taxon>
        <taxon>Herpetosiphonaceae</taxon>
        <taxon>Herpetosiphon</taxon>
    </lineage>
</organism>
<name>TATA_HERA2</name>
<dbReference type="EMBL" id="CP000875">
    <property type="protein sequence ID" value="ABX06318.1"/>
    <property type="molecule type" value="Genomic_DNA"/>
</dbReference>
<dbReference type="SMR" id="A9B6A7"/>
<dbReference type="STRING" id="316274.Haur_3682"/>
<dbReference type="KEGG" id="hau:Haur_3682"/>
<dbReference type="eggNOG" id="COG1826">
    <property type="taxonomic scope" value="Bacteria"/>
</dbReference>
<dbReference type="HOGENOM" id="CLU_086034_6_1_0"/>
<dbReference type="InParanoid" id="A9B6A7"/>
<dbReference type="Proteomes" id="UP000000787">
    <property type="component" value="Chromosome"/>
</dbReference>
<dbReference type="GO" id="GO:0033281">
    <property type="term" value="C:TAT protein transport complex"/>
    <property type="evidence" value="ECO:0007669"/>
    <property type="project" value="UniProtKB-UniRule"/>
</dbReference>
<dbReference type="GO" id="GO:0008320">
    <property type="term" value="F:protein transmembrane transporter activity"/>
    <property type="evidence" value="ECO:0007669"/>
    <property type="project" value="UniProtKB-UniRule"/>
</dbReference>
<dbReference type="GO" id="GO:0043953">
    <property type="term" value="P:protein transport by the Tat complex"/>
    <property type="evidence" value="ECO:0007669"/>
    <property type="project" value="UniProtKB-UniRule"/>
</dbReference>
<dbReference type="Gene3D" id="1.20.5.3310">
    <property type="match status" value="1"/>
</dbReference>
<dbReference type="HAMAP" id="MF_00236">
    <property type="entry name" value="TatA_E"/>
    <property type="match status" value="1"/>
</dbReference>
<dbReference type="InterPro" id="IPR003369">
    <property type="entry name" value="TatA/B/E"/>
</dbReference>
<dbReference type="InterPro" id="IPR006312">
    <property type="entry name" value="TatA/E"/>
</dbReference>
<dbReference type="NCBIfam" id="TIGR01411">
    <property type="entry name" value="tatAE"/>
    <property type="match status" value="1"/>
</dbReference>
<dbReference type="PANTHER" id="PTHR42982">
    <property type="entry name" value="SEC-INDEPENDENT PROTEIN TRANSLOCASE PROTEIN TATA"/>
    <property type="match status" value="1"/>
</dbReference>
<dbReference type="PANTHER" id="PTHR42982:SF1">
    <property type="entry name" value="SEC-INDEPENDENT PROTEIN TRANSLOCASE PROTEIN TATA"/>
    <property type="match status" value="1"/>
</dbReference>
<dbReference type="Pfam" id="PF02416">
    <property type="entry name" value="TatA_B_E"/>
    <property type="match status" value="1"/>
</dbReference>
<accession>A9B6A7</accession>
<sequence length="60" mass="6286">MAGLGVTELLIILAIVIVLFGASRIGDLGGAMGRGIREFRRGVRDEDATAPTDASKNESK</sequence>
<reference key="1">
    <citation type="journal article" date="2011" name="Stand. Genomic Sci.">
        <title>Complete genome sequence of the filamentous gliding predatory bacterium Herpetosiphon aurantiacus type strain (114-95(T)).</title>
        <authorList>
            <person name="Kiss H."/>
            <person name="Nett M."/>
            <person name="Domin N."/>
            <person name="Martin K."/>
            <person name="Maresca J.A."/>
            <person name="Copeland A."/>
            <person name="Lapidus A."/>
            <person name="Lucas S."/>
            <person name="Berry K.W."/>
            <person name="Glavina Del Rio T."/>
            <person name="Dalin E."/>
            <person name="Tice H."/>
            <person name="Pitluck S."/>
            <person name="Richardson P."/>
            <person name="Bruce D."/>
            <person name="Goodwin L."/>
            <person name="Han C."/>
            <person name="Detter J.C."/>
            <person name="Schmutz J."/>
            <person name="Brettin T."/>
            <person name="Land M."/>
            <person name="Hauser L."/>
            <person name="Kyrpides N.C."/>
            <person name="Ivanova N."/>
            <person name="Goeker M."/>
            <person name="Woyke T."/>
            <person name="Klenk H.P."/>
            <person name="Bryant D.A."/>
        </authorList>
    </citation>
    <scope>NUCLEOTIDE SEQUENCE [LARGE SCALE GENOMIC DNA]</scope>
    <source>
        <strain>ATCC 23779 / DSM 785 / 114-95</strain>
    </source>
</reference>